<proteinExistence type="inferred from homology"/>
<evidence type="ECO:0000250" key="1"/>
<evidence type="ECO:0000250" key="2">
    <source>
        <dbReference type="UniProtKB" id="P04180"/>
    </source>
</evidence>
<evidence type="ECO:0000255" key="3"/>
<evidence type="ECO:0000305" key="4"/>
<keyword id="KW-0012">Acyltransferase</keyword>
<keyword id="KW-0153">Cholesterol metabolism</keyword>
<keyword id="KW-1015">Disulfide bond</keyword>
<keyword id="KW-0325">Glycoprotein</keyword>
<keyword id="KW-0443">Lipid metabolism</keyword>
<keyword id="KW-0964">Secreted</keyword>
<keyword id="KW-0753">Steroid metabolism</keyword>
<keyword id="KW-1207">Sterol metabolism</keyword>
<keyword id="KW-0808">Transferase</keyword>
<gene>
    <name type="primary">LCAT</name>
</gene>
<comment type="function">
    <text evidence="2">Central enzyme in the extracellular metabolism of plasma lipoproteins. Synthesized mainly in the liver and secreted into plasma where it converts cholesterol and phosphatidylcholines (lecithins) to cholesteryl esters and lysophosphatidylcholines on the surface of high and low density lipoproteins (HDLs and LDLs). The cholesterol ester is then transported back to the liver. Has a preference for plasma 16:0-18:2 or 18:O-18:2 phosphatidylcholines. Also produced in the brain by primary astrocytes, and esterifies free cholesterol on nascent APOE-containing lipoproteins secreted from glia and influences cerebral spinal fluid (CSF) APOE- and APOA1 levels. Together with APOE and the cholesterol transporter ABCA1, plays a key role in the maturation of glial-derived, nascent lipoproteins. Required for remodeling high-density lipoprotein particles into their spherical forms (By similarity).</text>
</comment>
<comment type="catalytic activity">
    <reaction evidence="2">
        <text>a sterol + a 1,2-diacyl-sn-glycero-3-phosphocholine = a sterol ester + a 1-acyl-sn-glycero-3-phosphocholine</text>
        <dbReference type="Rhea" id="RHEA:21204"/>
        <dbReference type="ChEBI" id="CHEBI:15889"/>
        <dbReference type="ChEBI" id="CHEBI:35915"/>
        <dbReference type="ChEBI" id="CHEBI:57643"/>
        <dbReference type="ChEBI" id="CHEBI:58168"/>
        <dbReference type="EC" id="2.3.1.43"/>
    </reaction>
</comment>
<comment type="activity regulation">
    <text evidence="1">APOA1 is the most potent activator in plasma. Also activated by APOE, APOC1 and APOA4 (By similarity).</text>
</comment>
<comment type="subcellular location">
    <subcellularLocation>
        <location evidence="2">Secreted</location>
    </subcellularLocation>
    <text evidence="2">Secreted into blood plasma. Produced in astrocytes and secreted into cerebral spinal fluid (CSF) (By similarity).</text>
</comment>
<comment type="similarity">
    <text evidence="4">Belongs to the AB hydrolase superfamily. Lipase family.</text>
</comment>
<sequence>FFTIWLDINMFLPLGVDCWIDNTRVVYNRSSGRMSNAPGVQIRVPGFGKTYSVEYLDDNKLAGYLHTLVQNLVNNAYVRDETVRAAPYDWRLAPSQQDEYYQKLAELVEEMYDAYGKPVFLIGHRLGCLHVLHFLLHQSWKGIPIMSNIKLKEEQRITTTSPWMFPAHHVWPEDHVFISTPNFNYTGQDFKRFFADLHFEEGWYMFLQSRDLLEGLPAPGVEVYCLYGVGRPTRYTYIYDHNFPYKDPVAILYEDGDETVATRSTELCGQWQGRQSQPVYLLPMNGTDHLNMVFSNKTL</sequence>
<feature type="chain" id="PRO_0000090360" description="Phosphatidylcholine-sterol acyltransferase">
    <location>
        <begin position="1" status="less than"/>
        <end position="299" status="greater than"/>
    </location>
</feature>
<feature type="active site" description="Charge relay system" evidence="2">
    <location>
        <position position="257"/>
    </location>
</feature>
<feature type="active site" description="Charge relay system" evidence="2">
    <location>
        <position position="289"/>
    </location>
</feature>
<feature type="glycosylation site" description="N-linked (GlcNAc...) asparagine" evidence="3">
    <location>
        <position position="28"/>
    </location>
</feature>
<feature type="glycosylation site" description="N-linked (GlcNAc...) asparagine" evidence="3">
    <location>
        <position position="184"/>
    </location>
</feature>
<feature type="glycosylation site" description="N-linked (GlcNAc...) asparagine" evidence="3">
    <location>
        <position position="285"/>
    </location>
</feature>
<feature type="glycosylation site" description="N-linked (GlcNAc...) asparagine" evidence="3">
    <location>
        <position position="296"/>
    </location>
</feature>
<feature type="disulfide bond" evidence="2">
    <location>
        <begin position="225"/>
        <end position="268"/>
    </location>
</feature>
<feature type="non-terminal residue">
    <location>
        <position position="1"/>
    </location>
</feature>
<feature type="non-terminal residue">
    <location>
        <position position="299"/>
    </location>
</feature>
<organism>
    <name type="scientific">Micromys minutus</name>
    <name type="common">European harvest mouse</name>
    <dbReference type="NCBI Taxonomy" id="13151"/>
    <lineage>
        <taxon>Eukaryota</taxon>
        <taxon>Metazoa</taxon>
        <taxon>Chordata</taxon>
        <taxon>Craniata</taxon>
        <taxon>Vertebrata</taxon>
        <taxon>Euteleostomi</taxon>
        <taxon>Mammalia</taxon>
        <taxon>Eutheria</taxon>
        <taxon>Euarchontoglires</taxon>
        <taxon>Glires</taxon>
        <taxon>Rodentia</taxon>
        <taxon>Myomorpha</taxon>
        <taxon>Muroidea</taxon>
        <taxon>Muridae</taxon>
        <taxon>Murinae</taxon>
        <taxon>Micromys</taxon>
    </lineage>
</organism>
<dbReference type="EC" id="2.3.1.43" evidence="2"/>
<dbReference type="EMBL" id="AH005245">
    <property type="protein sequence ID" value="AAB58988.1"/>
    <property type="molecule type" value="Genomic_DNA"/>
</dbReference>
<dbReference type="SMR" id="O35724"/>
<dbReference type="GlyCosmos" id="O35724">
    <property type="glycosylation" value="4 sites, No reported glycans"/>
</dbReference>
<dbReference type="GO" id="GO:0005576">
    <property type="term" value="C:extracellular region"/>
    <property type="evidence" value="ECO:0007669"/>
    <property type="project" value="UniProtKB-SubCell"/>
</dbReference>
<dbReference type="GO" id="GO:0004607">
    <property type="term" value="F:phosphatidylcholine-sterol O-acyltransferase activity"/>
    <property type="evidence" value="ECO:0000250"/>
    <property type="project" value="UniProtKB"/>
</dbReference>
<dbReference type="GO" id="GO:0008203">
    <property type="term" value="P:cholesterol metabolic process"/>
    <property type="evidence" value="ECO:0000250"/>
    <property type="project" value="UniProtKB"/>
</dbReference>
<dbReference type="GO" id="GO:0046470">
    <property type="term" value="P:phosphatidylcholine metabolic process"/>
    <property type="evidence" value="ECO:0000250"/>
    <property type="project" value="UniProtKB"/>
</dbReference>
<dbReference type="FunFam" id="3.40.50.1820:FF:000720">
    <property type="entry name" value="Phosphatidylcholine-sterol acyltransferase"/>
    <property type="match status" value="1"/>
</dbReference>
<dbReference type="Gene3D" id="3.40.50.1820">
    <property type="entry name" value="alpha/beta hydrolase"/>
    <property type="match status" value="2"/>
</dbReference>
<dbReference type="InterPro" id="IPR029058">
    <property type="entry name" value="AB_hydrolase_fold"/>
</dbReference>
<dbReference type="InterPro" id="IPR003386">
    <property type="entry name" value="LACT/PDAT_acylTrfase"/>
</dbReference>
<dbReference type="PANTHER" id="PTHR11440">
    <property type="entry name" value="LECITHIN-CHOLESTEROL ACYLTRANSFERASE-RELATED"/>
    <property type="match status" value="1"/>
</dbReference>
<dbReference type="Pfam" id="PF02450">
    <property type="entry name" value="LCAT"/>
    <property type="match status" value="2"/>
</dbReference>
<dbReference type="SUPFAM" id="SSF53474">
    <property type="entry name" value="alpha/beta-Hydrolases"/>
    <property type="match status" value="1"/>
</dbReference>
<reference key="1">
    <citation type="journal article" date="1997" name="Mol. Phylogenet. Evol.">
        <title>Molecular phylogeny of rodents, with special emphasis on murids: evidence from nuclear gene LCAT.</title>
        <authorList>
            <person name="Robinson M."/>
            <person name="Catzeflis F."/>
            <person name="Briolay J."/>
            <person name="Mouchiroud D."/>
        </authorList>
    </citation>
    <scope>NUCLEOTIDE SEQUENCE [GENOMIC DNA]</scope>
</reference>
<protein>
    <recommendedName>
        <fullName>Phosphatidylcholine-sterol acyltransferase</fullName>
        <ecNumber evidence="2">2.3.1.43</ecNumber>
    </recommendedName>
    <alternativeName>
        <fullName>Lecithin-cholesterol acyltransferase</fullName>
    </alternativeName>
    <alternativeName>
        <fullName>Phospholipid-cholesterol acyltransferase</fullName>
    </alternativeName>
</protein>
<name>LCAT_MICMN</name>
<accession>O35724</accession>